<keyword id="KW-0217">Developmental protein</keyword>
<keyword id="KW-1015">Disulfide bond</keyword>
<keyword id="KW-0272">Extracellular matrix</keyword>
<keyword id="KW-0325">Glycoprotein</keyword>
<keyword id="KW-0449">Lipoprotein</keyword>
<keyword id="KW-0964">Secreted</keyword>
<keyword id="KW-0879">Wnt signaling pathway</keyword>
<protein>
    <recommendedName>
        <fullName>Protein Wnt-5a</fullName>
    </recommendedName>
</protein>
<name>WNT5A_ANSCE</name>
<sequence length="116" mass="12941">SGSCSLKTCWLQLADFRKVGDALKEKYDSAAAMKLNSRGKLVQVNSRFNAPTIHDLVYIDPSPDYCVRNESTGSLGTQGRLCNKTSEGMDGCELMCCGRGYDQFKTVQRERCHCKF</sequence>
<accession>P28109</accession>
<feature type="chain" id="PRO_0000200629" description="Protein Wnt-5a">
    <location>
        <begin position="1" status="less than"/>
        <end position="116" status="greater than"/>
    </location>
</feature>
<feature type="lipid moiety-binding region" description="O-palmitoleoyl serine; by PORCN" evidence="5">
    <location>
        <position position="1"/>
    </location>
</feature>
<feature type="glycosylation site" description="N-linked (GlcNAc...) asparagine" evidence="6">
    <location>
        <position position="69"/>
    </location>
</feature>
<feature type="glycosylation site" description="N-linked (GlcNAc...) asparagine" evidence="6">
    <location>
        <position position="83"/>
    </location>
</feature>
<feature type="disulfide bond" evidence="3">
    <location>
        <begin position="82"/>
        <end position="97"/>
    </location>
</feature>
<feature type="non-terminal residue">
    <location>
        <position position="1"/>
    </location>
</feature>
<feature type="non-terminal residue">
    <location>
        <position position="116"/>
    </location>
</feature>
<gene>
    <name type="primary">WNT5A</name>
</gene>
<reference key="1">
    <citation type="journal article" date="1992" name="Proc. Natl. Acad. Sci. U.S.A.">
        <title>Diversification of the Wnt gene family on the ancestral lineage of vertebrates.</title>
        <authorList>
            <person name="Sidow A."/>
        </authorList>
    </citation>
    <scope>NUCLEOTIDE SEQUENCE [GENOMIC DNA]</scope>
</reference>
<proteinExistence type="inferred from homology"/>
<comment type="function">
    <text evidence="1">Ligand for members of the frizzled family of seven transmembrane receptors. Can activate or inhibit canonical Wnt signaling, depending on receptor context. Required during embryogenesis for extension of the primary anterior-posterior axis.</text>
</comment>
<comment type="subcellular location">
    <subcellularLocation>
        <location evidence="4">Secreted</location>
        <location evidence="4">Extracellular space</location>
        <location evidence="4">Extracellular matrix</location>
    </subcellularLocation>
    <subcellularLocation>
        <location evidence="4">Secreted</location>
    </subcellularLocation>
</comment>
<comment type="PTM">
    <text evidence="2 5">Palmitoleoylation is required for efficient binding to frizzled receptors. Depalmitoleoylation leads to Wnt signaling pathway inhibition.</text>
</comment>
<comment type="similarity">
    <text evidence="7">Belongs to the Wnt family.</text>
</comment>
<dbReference type="EMBL" id="M91260">
    <property type="protein sequence ID" value="AAA49319.1"/>
    <property type="molecule type" value="Genomic_DNA"/>
</dbReference>
<dbReference type="SMR" id="P28109"/>
<dbReference type="GlyCosmos" id="P28109">
    <property type="glycosylation" value="2 sites, No reported glycans"/>
</dbReference>
<dbReference type="GO" id="GO:0005615">
    <property type="term" value="C:extracellular space"/>
    <property type="evidence" value="ECO:0007669"/>
    <property type="project" value="TreeGrafter"/>
</dbReference>
<dbReference type="GO" id="GO:0005125">
    <property type="term" value="F:cytokine activity"/>
    <property type="evidence" value="ECO:0007669"/>
    <property type="project" value="TreeGrafter"/>
</dbReference>
<dbReference type="GO" id="GO:0005109">
    <property type="term" value="F:frizzled binding"/>
    <property type="evidence" value="ECO:0007669"/>
    <property type="project" value="TreeGrafter"/>
</dbReference>
<dbReference type="GO" id="GO:0060070">
    <property type="term" value="P:canonical Wnt signaling pathway"/>
    <property type="evidence" value="ECO:0007669"/>
    <property type="project" value="TreeGrafter"/>
</dbReference>
<dbReference type="GO" id="GO:0045165">
    <property type="term" value="P:cell fate commitment"/>
    <property type="evidence" value="ECO:0007669"/>
    <property type="project" value="TreeGrafter"/>
</dbReference>
<dbReference type="GO" id="GO:0030182">
    <property type="term" value="P:neuron differentiation"/>
    <property type="evidence" value="ECO:0007669"/>
    <property type="project" value="TreeGrafter"/>
</dbReference>
<dbReference type="Gene3D" id="3.30.2460.20">
    <property type="match status" value="1"/>
</dbReference>
<dbReference type="InterPro" id="IPR005817">
    <property type="entry name" value="Wnt"/>
</dbReference>
<dbReference type="InterPro" id="IPR043158">
    <property type="entry name" value="Wnt_C"/>
</dbReference>
<dbReference type="PANTHER" id="PTHR12027:SF33">
    <property type="entry name" value="PROTEIN WNT-5A"/>
    <property type="match status" value="1"/>
</dbReference>
<dbReference type="PANTHER" id="PTHR12027">
    <property type="entry name" value="WNT RELATED"/>
    <property type="match status" value="1"/>
</dbReference>
<dbReference type="Pfam" id="PF00110">
    <property type="entry name" value="wnt"/>
    <property type="match status" value="1"/>
</dbReference>
<dbReference type="SMART" id="SM00097">
    <property type="entry name" value="WNT1"/>
    <property type="match status" value="1"/>
</dbReference>
<evidence type="ECO:0000250" key="1">
    <source>
        <dbReference type="UniProtKB" id="P22725"/>
    </source>
</evidence>
<evidence type="ECO:0000250" key="2">
    <source>
        <dbReference type="UniProtKB" id="P27467"/>
    </source>
</evidence>
<evidence type="ECO:0000250" key="3">
    <source>
        <dbReference type="UniProtKB" id="P28026"/>
    </source>
</evidence>
<evidence type="ECO:0000250" key="4">
    <source>
        <dbReference type="UniProtKB" id="P41221"/>
    </source>
</evidence>
<evidence type="ECO:0000250" key="5">
    <source>
        <dbReference type="UniProtKB" id="P56704"/>
    </source>
</evidence>
<evidence type="ECO:0000255" key="6"/>
<evidence type="ECO:0000305" key="7"/>
<organism>
    <name type="scientific">Anser caerulescens</name>
    <name type="common">Snow goose</name>
    <name type="synonym">Chen caerulescens</name>
    <dbReference type="NCBI Taxonomy" id="8849"/>
    <lineage>
        <taxon>Eukaryota</taxon>
        <taxon>Metazoa</taxon>
        <taxon>Chordata</taxon>
        <taxon>Craniata</taxon>
        <taxon>Vertebrata</taxon>
        <taxon>Euteleostomi</taxon>
        <taxon>Archelosauria</taxon>
        <taxon>Archosauria</taxon>
        <taxon>Dinosauria</taxon>
        <taxon>Saurischia</taxon>
        <taxon>Theropoda</taxon>
        <taxon>Coelurosauria</taxon>
        <taxon>Aves</taxon>
        <taxon>Neognathae</taxon>
        <taxon>Galloanserae</taxon>
        <taxon>Anseriformes</taxon>
        <taxon>Anatidae</taxon>
        <taxon>Anserinae</taxon>
        <taxon>Anser</taxon>
    </lineage>
</organism>